<proteinExistence type="evidence at transcript level"/>
<gene>
    <name evidence="6" type="primary">KIN4C</name>
    <name evidence="9 10" type="ordered locus">Os02g0742800/Os02g0742900</name>
    <name evidence="6" type="ordered locus">LOC_Os02g50910</name>
    <name evidence="8" type="ORF">OJ1734_E02.4/OJ1734_E02.5</name>
    <name evidence="11" type="ORF">OsJ_08347</name>
    <name evidence="7" type="ORF">P0585G03.27/P0585G03.28</name>
</gene>
<sequence length="1284" mass="143049">MEGSEAAQQKDSVKVVVNIRPLITPELLLGCTDCVTVTPGEPQVQIGPHVFTYDHVFGSTGSPSSLIFEQCVHPLIDSLFRGYNATVLAYGQTGSGKTYTMGTNYTGEANCGGIIPQVMETIFKKADALKDGTEFLIRVSFIEIFKEEVFDLLDASHAALRLDSGSVAKATAPARVPIQIRETGNGGITLAGVTEAEVKTKEEMASFLARGSSSRATGSTNMNSQSSRSHAIFTISMDQKKTSSASDKLSNDDYDILSSKFHLVDLAGSERAKRTGADGLRLKEGIHINRGLLALGNVISALGDEKKRKEGAFVPYRDSKLTRLLQDSLGGNSKTAMIACISPADSNAEETINTLKYANRARNIQNKAVVWSFSLKINRDPVTAEMQKLRSQLEQLQTELLFSRSGSAALEELQLLQQKVSLLELKNSELNHELKERELSYEQLAQSALAAQLEKDQLMLKIESARNGKSWDDIENTDTDQDVEVMKRYILKIQQLESELTRQKFSSTCKNDLHDRFAMDKDLLLDDLGSGCEVGTPDASSAVNFRITPVPAGEADEEKERDHSSMQDKLDKELQELDKRLQQKEAEMKEFAKSDTSVLKQHYEKKLNEMEQEKKALQKEIEELRHALTNITSSTDESAQKLKENYLQKLNTLESQVSELKKKQEAQQQLIRQKQRSDEAAKRLQEDIHRIKSQKVQLQQKIKQESEQFRSWKAAREKEVLQLKKEGRRNEYEMHKLLALNQRQKMVLQRKTEEAAMATKRLKESLEAKKSTRDTYGSASGSGIQALMRAIDDELEVTVRAYELRSHYERQMQERAAISKEIAKLKECPQAMSPSARSSRISALENMLSSSSSAMVSMASQLSEAEERERAFNGKGRWNHVRSLPDAKNTMNYLFQLASSSRCQQLDKEVMCKEKEHLICDLKEKVVALNGRIRQLETQVKDLNNQNMLLFTAISEAKNPVGTSRKGTVGSEDGQHYAMRKSIRASHSLHYSKNSFLWSDDMDISDSEKSEGSDADWEASDADYGASDADWECSKKVRRRRQTVSSHLNPNPGSGTTQKSAKSEMASQEKSTSLDLAPQCCSCSKYSSCKTQKCECRASGSHCGGDCGCITSRCSNRVDMKEEKEGGGVVEVSSSDDVDDAKVQEIVKEGVMLLENSMSEKEAQETKSRKPLADIGNGVVKQTGAKPKQRKNWRKSTVQLVPSAPPLPPTAPQNTEPVPRNRDIPLRLPRAMSSPAVDSIPLTDRNAAKPDESMSSNKENVTAVRARSPARPRKNANEKENHLR</sequence>
<feature type="chain" id="PRO_0000436188" description="Kinesin-like protein KIN-4C">
    <location>
        <begin position="1"/>
        <end position="1284"/>
    </location>
</feature>
<feature type="domain" description="Kinesin motor" evidence="3">
    <location>
        <begin position="12"/>
        <end position="364"/>
    </location>
</feature>
<feature type="region of interest" description="Disordered" evidence="4">
    <location>
        <begin position="1040"/>
        <end position="1070"/>
    </location>
</feature>
<feature type="region of interest" description="Disordered" evidence="4">
    <location>
        <begin position="1158"/>
        <end position="1284"/>
    </location>
</feature>
<feature type="coiled-coil region" evidence="2">
    <location>
        <begin position="407"/>
        <end position="445"/>
    </location>
</feature>
<feature type="coiled-coil region" evidence="2">
    <location>
        <begin position="561"/>
        <end position="711"/>
    </location>
</feature>
<feature type="coiled-coil region" evidence="2">
    <location>
        <begin position="911"/>
        <end position="950"/>
    </location>
</feature>
<feature type="compositionally biased region" description="Polar residues" evidence="4">
    <location>
        <begin position="1043"/>
        <end position="1070"/>
    </location>
</feature>
<feature type="compositionally biased region" description="Basic and acidic residues" evidence="4">
    <location>
        <begin position="1158"/>
        <end position="1172"/>
    </location>
</feature>
<feature type="compositionally biased region" description="Basic and acidic residues" evidence="4">
    <location>
        <begin position="1275"/>
        <end position="1284"/>
    </location>
</feature>
<feature type="binding site" evidence="3">
    <location>
        <begin position="91"/>
        <end position="98"/>
    </location>
    <ligand>
        <name>ATP</name>
        <dbReference type="ChEBI" id="CHEBI:30616"/>
    </ligand>
</feature>
<feature type="sequence conflict" description="In Ref. 5; AK106279." evidence="6" ref="5">
    <original>L</original>
    <variation>F</variation>
    <location>
        <position position="906"/>
    </location>
</feature>
<feature type="sequence conflict" description="In Ref. 5; AK106279." evidence="6" ref="5">
    <original>N</original>
    <variation>K</variation>
    <location>
        <position position="1177"/>
    </location>
</feature>
<comment type="function">
    <text evidence="1">Microtubule-dependent motor protein involved in the control of the oriented deposition of cellulose microfibrils.</text>
</comment>
<comment type="subunit">
    <text evidence="1">Homodimer.</text>
</comment>
<comment type="domain">
    <text evidence="1">Composed of an N-terminal domain which is responsible for the motor activity of kinesin (it hydrolyzes ATP and binds microtubule) and a central to C-terminal alpha-helical coiled coil domain that mediates the heavy chain dimerization.</text>
</comment>
<comment type="similarity">
    <text evidence="5">Belongs to the TRAFAC class myosin-kinesin ATPase superfamily. Kinesin family. KIN-4 subfamily.</text>
</comment>
<comment type="sequence caution" evidence="6">
    <conflict type="erroneous gene model prediction">
        <sequence resource="EMBL-CDS" id="BAD15740"/>
    </conflict>
</comment>
<comment type="sequence caution" evidence="6">
    <conflict type="erroneous gene model prediction">
        <sequence resource="EMBL-CDS" id="BAD16101"/>
    </conflict>
</comment>
<comment type="sequence caution" evidence="6">
    <conflict type="erroneous gene model prediction">
        <sequence resource="EMBL-CDS" id="BAF10005"/>
    </conflict>
    <text>Was originally thought to correspond to two different genes Os02g0742800 and Os02g0742900.</text>
</comment>
<comment type="sequence caution" evidence="6">
    <conflict type="erroneous gene model prediction">
        <sequence resource="EMBL-CDS" id="BAF10006"/>
    </conflict>
    <text>Was originally thought to correspond to two different genes Os02g0742800 and Os02g0742900.</text>
</comment>
<comment type="sequence caution" evidence="6">
    <conflict type="erroneous gene model prediction">
        <sequence resource="EMBL-CDS" id="BAS80868"/>
    </conflict>
    <text>Was originally thought to correspond to two different genes Os02g0742800 and Os02g0742900.</text>
</comment>
<comment type="sequence caution" evidence="6">
    <conflict type="erroneous gene model prediction">
        <sequence resource="EMBL-CDS" id="BAS80869"/>
    </conflict>
    <text>Was originally thought to correspond to two different genes Os02g0742800 and Os02g0742900.</text>
</comment>
<accession>B9F2Y7</accession>
<accession>Q0DXN2</accession>
<accession>Q6Z2W0</accession>
<reference key="1">
    <citation type="journal article" date="2005" name="Nature">
        <title>The map-based sequence of the rice genome.</title>
        <authorList>
            <consortium name="International rice genome sequencing project (IRGSP)"/>
        </authorList>
    </citation>
    <scope>NUCLEOTIDE SEQUENCE [LARGE SCALE GENOMIC DNA]</scope>
    <source>
        <strain>cv. Nipponbare</strain>
    </source>
</reference>
<reference key="2">
    <citation type="journal article" date="2008" name="Nucleic Acids Res.">
        <title>The rice annotation project database (RAP-DB): 2008 update.</title>
        <authorList>
            <consortium name="The rice annotation project (RAP)"/>
        </authorList>
    </citation>
    <scope>GENOME REANNOTATION</scope>
    <source>
        <strain>cv. Nipponbare</strain>
    </source>
</reference>
<reference key="3">
    <citation type="journal article" date="2013" name="Rice">
        <title>Improvement of the Oryza sativa Nipponbare reference genome using next generation sequence and optical map data.</title>
        <authorList>
            <person name="Kawahara Y."/>
            <person name="de la Bastide M."/>
            <person name="Hamilton J.P."/>
            <person name="Kanamori H."/>
            <person name="McCombie W.R."/>
            <person name="Ouyang S."/>
            <person name="Schwartz D.C."/>
            <person name="Tanaka T."/>
            <person name="Wu J."/>
            <person name="Zhou S."/>
            <person name="Childs K.L."/>
            <person name="Davidson R.M."/>
            <person name="Lin H."/>
            <person name="Quesada-Ocampo L."/>
            <person name="Vaillancourt B."/>
            <person name="Sakai H."/>
            <person name="Lee S.S."/>
            <person name="Kim J."/>
            <person name="Numa H."/>
            <person name="Itoh T."/>
            <person name="Buell C.R."/>
            <person name="Matsumoto T."/>
        </authorList>
    </citation>
    <scope>GENOME REANNOTATION</scope>
    <source>
        <strain>cv. Nipponbare</strain>
    </source>
</reference>
<reference key="4">
    <citation type="journal article" date="2005" name="PLoS Biol.">
        <title>The genomes of Oryza sativa: a history of duplications.</title>
        <authorList>
            <person name="Yu J."/>
            <person name="Wang J."/>
            <person name="Lin W."/>
            <person name="Li S."/>
            <person name="Li H."/>
            <person name="Zhou J."/>
            <person name="Ni P."/>
            <person name="Dong W."/>
            <person name="Hu S."/>
            <person name="Zeng C."/>
            <person name="Zhang J."/>
            <person name="Zhang Y."/>
            <person name="Li R."/>
            <person name="Xu Z."/>
            <person name="Li S."/>
            <person name="Li X."/>
            <person name="Zheng H."/>
            <person name="Cong L."/>
            <person name="Lin L."/>
            <person name="Yin J."/>
            <person name="Geng J."/>
            <person name="Li G."/>
            <person name="Shi J."/>
            <person name="Liu J."/>
            <person name="Lv H."/>
            <person name="Li J."/>
            <person name="Wang J."/>
            <person name="Deng Y."/>
            <person name="Ran L."/>
            <person name="Shi X."/>
            <person name="Wang X."/>
            <person name="Wu Q."/>
            <person name="Li C."/>
            <person name="Ren X."/>
            <person name="Wang J."/>
            <person name="Wang X."/>
            <person name="Li D."/>
            <person name="Liu D."/>
            <person name="Zhang X."/>
            <person name="Ji Z."/>
            <person name="Zhao W."/>
            <person name="Sun Y."/>
            <person name="Zhang Z."/>
            <person name="Bao J."/>
            <person name="Han Y."/>
            <person name="Dong L."/>
            <person name="Ji J."/>
            <person name="Chen P."/>
            <person name="Wu S."/>
            <person name="Liu J."/>
            <person name="Xiao Y."/>
            <person name="Bu D."/>
            <person name="Tan J."/>
            <person name="Yang L."/>
            <person name="Ye C."/>
            <person name="Zhang J."/>
            <person name="Xu J."/>
            <person name="Zhou Y."/>
            <person name="Yu Y."/>
            <person name="Zhang B."/>
            <person name="Zhuang S."/>
            <person name="Wei H."/>
            <person name="Liu B."/>
            <person name="Lei M."/>
            <person name="Yu H."/>
            <person name="Li Y."/>
            <person name="Xu H."/>
            <person name="Wei S."/>
            <person name="He X."/>
            <person name="Fang L."/>
            <person name="Zhang Z."/>
            <person name="Zhang Y."/>
            <person name="Huang X."/>
            <person name="Su Z."/>
            <person name="Tong W."/>
            <person name="Li J."/>
            <person name="Tong Z."/>
            <person name="Li S."/>
            <person name="Ye J."/>
            <person name="Wang L."/>
            <person name="Fang L."/>
            <person name="Lei T."/>
            <person name="Chen C.-S."/>
            <person name="Chen H.-C."/>
            <person name="Xu Z."/>
            <person name="Li H."/>
            <person name="Huang H."/>
            <person name="Zhang F."/>
            <person name="Xu H."/>
            <person name="Li N."/>
            <person name="Zhao C."/>
            <person name="Li S."/>
            <person name="Dong L."/>
            <person name="Huang Y."/>
            <person name="Li L."/>
            <person name="Xi Y."/>
            <person name="Qi Q."/>
            <person name="Li W."/>
            <person name="Zhang B."/>
            <person name="Hu W."/>
            <person name="Zhang Y."/>
            <person name="Tian X."/>
            <person name="Jiao Y."/>
            <person name="Liang X."/>
            <person name="Jin J."/>
            <person name="Gao L."/>
            <person name="Zheng W."/>
            <person name="Hao B."/>
            <person name="Liu S.-M."/>
            <person name="Wang W."/>
            <person name="Yuan L."/>
            <person name="Cao M."/>
            <person name="McDermott J."/>
            <person name="Samudrala R."/>
            <person name="Wang J."/>
            <person name="Wong G.K.-S."/>
            <person name="Yang H."/>
        </authorList>
    </citation>
    <scope>NUCLEOTIDE SEQUENCE [LARGE SCALE GENOMIC DNA]</scope>
    <source>
        <strain>cv. Nipponbare</strain>
    </source>
</reference>
<reference key="5">
    <citation type="journal article" date="2003" name="Science">
        <title>Collection, mapping, and annotation of over 28,000 cDNA clones from japonica rice.</title>
        <authorList>
            <consortium name="The rice full-length cDNA consortium"/>
        </authorList>
    </citation>
    <scope>NUCLEOTIDE SEQUENCE [LARGE SCALE MRNA] OF 1-304</scope>
    <scope>NUCLEOTIDE SEQUENCE [LARGE SCALE MRNA] OF 734-1284</scope>
    <source>
        <strain>cv. Nipponbare</strain>
    </source>
</reference>
<reference key="6">
    <citation type="journal article" date="2009" name="Ann. Bot.">
        <title>Evaluating the microtubule cytoskeleton and its interacting proteins in monocots by mining the rice genome.</title>
        <authorList>
            <person name="Guo L."/>
            <person name="Ho C.M."/>
            <person name="Kong Z."/>
            <person name="Lee Y.R."/>
            <person name="Qian Q."/>
            <person name="Liu B."/>
        </authorList>
    </citation>
    <scope>GENE FAMILY</scope>
    <scope>NOMENCLATURE</scope>
</reference>
<protein>
    <recommendedName>
        <fullName evidence="6">Kinesin-like protein KIN-4C</fullName>
    </recommendedName>
</protein>
<dbReference type="EMBL" id="AP004800">
    <property type="protein sequence ID" value="BAD15740.1"/>
    <property type="status" value="ALT_SEQ"/>
    <property type="molecule type" value="Genomic_DNA"/>
</dbReference>
<dbReference type="EMBL" id="AP005297">
    <property type="protein sequence ID" value="BAD16101.1"/>
    <property type="status" value="ALT_SEQ"/>
    <property type="molecule type" value="Genomic_DNA"/>
</dbReference>
<dbReference type="EMBL" id="AP008208">
    <property type="protein sequence ID" value="BAF10005.1"/>
    <property type="status" value="ALT_SEQ"/>
    <property type="molecule type" value="Genomic_DNA"/>
</dbReference>
<dbReference type="EMBL" id="AP008208">
    <property type="protein sequence ID" value="BAF10006.1"/>
    <property type="status" value="ALT_SEQ"/>
    <property type="molecule type" value="Genomic_DNA"/>
</dbReference>
<dbReference type="EMBL" id="AP014958">
    <property type="protein sequence ID" value="BAS80868.1"/>
    <property type="status" value="ALT_SEQ"/>
    <property type="molecule type" value="Genomic_DNA"/>
</dbReference>
<dbReference type="EMBL" id="AP014958">
    <property type="protein sequence ID" value="BAS80869.1"/>
    <property type="status" value="ALT_SEQ"/>
    <property type="molecule type" value="Genomic_DNA"/>
</dbReference>
<dbReference type="EMBL" id="CM000139">
    <property type="protein sequence ID" value="EEE57794.1"/>
    <property type="molecule type" value="Genomic_DNA"/>
</dbReference>
<dbReference type="EMBL" id="AK064545">
    <property type="status" value="NOT_ANNOTATED_CDS"/>
    <property type="molecule type" value="mRNA"/>
</dbReference>
<dbReference type="EMBL" id="AK106279">
    <property type="status" value="NOT_ANNOTATED_CDS"/>
    <property type="molecule type" value="mRNA"/>
</dbReference>
<dbReference type="SMR" id="B9F2Y7"/>
<dbReference type="FunCoup" id="B9F2Y7">
    <property type="interactions" value="564"/>
</dbReference>
<dbReference type="STRING" id="39947.B9F2Y7"/>
<dbReference type="PaxDb" id="39947-B9F2Y7"/>
<dbReference type="KEGG" id="dosa:Os02g0742800"/>
<dbReference type="KEGG" id="dosa:Os02g0742900"/>
<dbReference type="eggNOG" id="KOG0244">
    <property type="taxonomic scope" value="Eukaryota"/>
</dbReference>
<dbReference type="InParanoid" id="B9F2Y7"/>
<dbReference type="Proteomes" id="UP000000763">
    <property type="component" value="Chromosome 2"/>
</dbReference>
<dbReference type="Proteomes" id="UP000007752">
    <property type="component" value="Chromosome 2"/>
</dbReference>
<dbReference type="Proteomes" id="UP000059680">
    <property type="component" value="Chromosome 2"/>
</dbReference>
<dbReference type="GO" id="GO:0005874">
    <property type="term" value="C:microtubule"/>
    <property type="evidence" value="ECO:0007669"/>
    <property type="project" value="UniProtKB-KW"/>
</dbReference>
<dbReference type="GO" id="GO:0005875">
    <property type="term" value="C:microtubule associated complex"/>
    <property type="evidence" value="ECO:0000318"/>
    <property type="project" value="GO_Central"/>
</dbReference>
<dbReference type="GO" id="GO:0005524">
    <property type="term" value="F:ATP binding"/>
    <property type="evidence" value="ECO:0007669"/>
    <property type="project" value="UniProtKB-KW"/>
</dbReference>
<dbReference type="GO" id="GO:0008017">
    <property type="term" value="F:microtubule binding"/>
    <property type="evidence" value="ECO:0007669"/>
    <property type="project" value="InterPro"/>
</dbReference>
<dbReference type="GO" id="GO:0003777">
    <property type="term" value="F:microtubule motor activity"/>
    <property type="evidence" value="ECO:0000318"/>
    <property type="project" value="GO_Central"/>
</dbReference>
<dbReference type="GO" id="GO:0071555">
    <property type="term" value="P:cell wall organization"/>
    <property type="evidence" value="ECO:0007669"/>
    <property type="project" value="UniProtKB-KW"/>
</dbReference>
<dbReference type="GO" id="GO:0007018">
    <property type="term" value="P:microtubule-based movement"/>
    <property type="evidence" value="ECO:0007669"/>
    <property type="project" value="InterPro"/>
</dbReference>
<dbReference type="GO" id="GO:0007052">
    <property type="term" value="P:mitotic spindle organization"/>
    <property type="evidence" value="ECO:0000318"/>
    <property type="project" value="GO_Central"/>
</dbReference>
<dbReference type="GO" id="GO:0051231">
    <property type="term" value="P:spindle elongation"/>
    <property type="evidence" value="ECO:0000318"/>
    <property type="project" value="GO_Central"/>
</dbReference>
<dbReference type="CDD" id="cd01372">
    <property type="entry name" value="KISc_KIF4"/>
    <property type="match status" value="1"/>
</dbReference>
<dbReference type="FunFam" id="3.40.850.10:FF:000032">
    <property type="entry name" value="kinesin-like protein KIN-4A isoform X1"/>
    <property type="match status" value="1"/>
</dbReference>
<dbReference type="Gene3D" id="3.40.850.10">
    <property type="entry name" value="Kinesin motor domain"/>
    <property type="match status" value="1"/>
</dbReference>
<dbReference type="InterPro" id="IPR027640">
    <property type="entry name" value="Kinesin-like_fam"/>
</dbReference>
<dbReference type="InterPro" id="IPR019821">
    <property type="entry name" value="Kinesin_motor_CS"/>
</dbReference>
<dbReference type="InterPro" id="IPR001752">
    <property type="entry name" value="Kinesin_motor_dom"/>
</dbReference>
<dbReference type="InterPro" id="IPR036961">
    <property type="entry name" value="Kinesin_motor_dom_sf"/>
</dbReference>
<dbReference type="InterPro" id="IPR027417">
    <property type="entry name" value="P-loop_NTPase"/>
</dbReference>
<dbReference type="PANTHER" id="PTHR47969">
    <property type="entry name" value="CHROMOSOME-ASSOCIATED KINESIN KIF4A-RELATED"/>
    <property type="match status" value="1"/>
</dbReference>
<dbReference type="PANTHER" id="PTHR47969:SF6">
    <property type="entry name" value="KINESIN-LIKE PROTEIN KIN-4C"/>
    <property type="match status" value="1"/>
</dbReference>
<dbReference type="Pfam" id="PF00225">
    <property type="entry name" value="Kinesin"/>
    <property type="match status" value="1"/>
</dbReference>
<dbReference type="PRINTS" id="PR00380">
    <property type="entry name" value="KINESINHEAVY"/>
</dbReference>
<dbReference type="SMART" id="SM00129">
    <property type="entry name" value="KISc"/>
    <property type="match status" value="1"/>
</dbReference>
<dbReference type="SUPFAM" id="SSF52540">
    <property type="entry name" value="P-loop containing nucleoside triphosphate hydrolases"/>
    <property type="match status" value="1"/>
</dbReference>
<dbReference type="PROSITE" id="PS00411">
    <property type="entry name" value="KINESIN_MOTOR_1"/>
    <property type="match status" value="1"/>
</dbReference>
<dbReference type="PROSITE" id="PS50067">
    <property type="entry name" value="KINESIN_MOTOR_2"/>
    <property type="match status" value="1"/>
</dbReference>
<evidence type="ECO:0000250" key="1">
    <source>
        <dbReference type="UniProtKB" id="Q6YUL8"/>
    </source>
</evidence>
<evidence type="ECO:0000255" key="2"/>
<evidence type="ECO:0000255" key="3">
    <source>
        <dbReference type="PROSITE-ProRule" id="PRU00283"/>
    </source>
</evidence>
<evidence type="ECO:0000256" key="4">
    <source>
        <dbReference type="SAM" id="MobiDB-lite"/>
    </source>
</evidence>
<evidence type="ECO:0000303" key="5">
    <source>
    </source>
</evidence>
<evidence type="ECO:0000305" key="6"/>
<evidence type="ECO:0000312" key="7">
    <source>
        <dbReference type="EMBL" id="BAD15740.1"/>
    </source>
</evidence>
<evidence type="ECO:0000312" key="8">
    <source>
        <dbReference type="EMBL" id="BAD16101.1"/>
    </source>
</evidence>
<evidence type="ECO:0000312" key="9">
    <source>
        <dbReference type="EMBL" id="BAF10005.1"/>
    </source>
</evidence>
<evidence type="ECO:0000312" key="10">
    <source>
        <dbReference type="EMBL" id="BAF10006.1"/>
    </source>
</evidence>
<evidence type="ECO:0000312" key="11">
    <source>
        <dbReference type="EMBL" id="EEE57794.1"/>
    </source>
</evidence>
<organism>
    <name type="scientific">Oryza sativa subsp. japonica</name>
    <name type="common">Rice</name>
    <dbReference type="NCBI Taxonomy" id="39947"/>
    <lineage>
        <taxon>Eukaryota</taxon>
        <taxon>Viridiplantae</taxon>
        <taxon>Streptophyta</taxon>
        <taxon>Embryophyta</taxon>
        <taxon>Tracheophyta</taxon>
        <taxon>Spermatophyta</taxon>
        <taxon>Magnoliopsida</taxon>
        <taxon>Liliopsida</taxon>
        <taxon>Poales</taxon>
        <taxon>Poaceae</taxon>
        <taxon>BOP clade</taxon>
        <taxon>Oryzoideae</taxon>
        <taxon>Oryzeae</taxon>
        <taxon>Oryzinae</taxon>
        <taxon>Oryza</taxon>
        <taxon>Oryza sativa</taxon>
    </lineage>
</organism>
<name>KN4C_ORYSJ</name>
<keyword id="KW-0067">ATP-binding</keyword>
<keyword id="KW-0961">Cell wall biogenesis/degradation</keyword>
<keyword id="KW-0175">Coiled coil</keyword>
<keyword id="KW-0493">Microtubule</keyword>
<keyword id="KW-0505">Motor protein</keyword>
<keyword id="KW-0547">Nucleotide-binding</keyword>
<keyword id="KW-1185">Reference proteome</keyword>